<organism>
    <name type="scientific">Methanococcus maripaludis (strain C6 / ATCC BAA-1332)</name>
    <dbReference type="NCBI Taxonomy" id="444158"/>
    <lineage>
        <taxon>Archaea</taxon>
        <taxon>Methanobacteriati</taxon>
        <taxon>Methanobacteriota</taxon>
        <taxon>Methanomada group</taxon>
        <taxon>Methanococci</taxon>
        <taxon>Methanococcales</taxon>
        <taxon>Methanococcaceae</taxon>
        <taxon>Methanococcus</taxon>
    </lineage>
</organism>
<protein>
    <recommendedName>
        <fullName evidence="1">tRNA (guanine(26)-N(2))-dimethyltransferase</fullName>
        <ecNumber evidence="1">2.1.1.216</ecNumber>
    </recommendedName>
    <alternativeName>
        <fullName evidence="1">tRNA 2,2-dimethylguanosine-26 methyltransferase</fullName>
    </alternativeName>
    <alternativeName>
        <fullName evidence="1">tRNA(guanine-26,N(2)-N(2)) methyltransferase</fullName>
    </alternativeName>
    <alternativeName>
        <fullName evidence="1">tRNA(m(2,2)G26)dimethyltransferase</fullName>
    </alternativeName>
</protein>
<keyword id="KW-0489">Methyltransferase</keyword>
<keyword id="KW-0694">RNA-binding</keyword>
<keyword id="KW-0949">S-adenosyl-L-methionine</keyword>
<keyword id="KW-0808">Transferase</keyword>
<keyword id="KW-0819">tRNA processing</keyword>
<keyword id="KW-0820">tRNA-binding</keyword>
<feature type="chain" id="PRO_1000114978" description="tRNA (guanine(26)-N(2))-dimethyltransferase">
    <location>
        <begin position="1"/>
        <end position="373"/>
    </location>
</feature>
<feature type="domain" description="Trm1 methyltransferase" evidence="1">
    <location>
        <begin position="2"/>
        <end position="365"/>
    </location>
</feature>
<feature type="binding site" evidence="1">
    <location>
        <position position="35"/>
    </location>
    <ligand>
        <name>S-adenosyl-L-methionine</name>
        <dbReference type="ChEBI" id="CHEBI:59789"/>
    </ligand>
</feature>
<feature type="binding site" evidence="1">
    <location>
        <position position="66"/>
    </location>
    <ligand>
        <name>S-adenosyl-L-methionine</name>
        <dbReference type="ChEBI" id="CHEBI:59789"/>
    </ligand>
</feature>
<feature type="binding site" evidence="1">
    <location>
        <position position="86"/>
    </location>
    <ligand>
        <name>S-adenosyl-L-methionine</name>
        <dbReference type="ChEBI" id="CHEBI:59789"/>
    </ligand>
</feature>
<feature type="binding site" evidence="1">
    <location>
        <position position="113"/>
    </location>
    <ligand>
        <name>S-adenosyl-L-methionine</name>
        <dbReference type="ChEBI" id="CHEBI:59789"/>
    </ligand>
</feature>
<feature type="binding site" evidence="1">
    <location>
        <position position="114"/>
    </location>
    <ligand>
        <name>S-adenosyl-L-methionine</name>
        <dbReference type="ChEBI" id="CHEBI:59789"/>
    </ligand>
</feature>
<evidence type="ECO:0000255" key="1">
    <source>
        <dbReference type="HAMAP-Rule" id="MF_00290"/>
    </source>
</evidence>
<proteinExistence type="inferred from homology"/>
<name>TRM1_METM6</name>
<reference key="1">
    <citation type="submission" date="2007-10" db="EMBL/GenBank/DDBJ databases">
        <title>Complete sequence of Methanococcus maripaludis C6.</title>
        <authorList>
            <consortium name="US DOE Joint Genome Institute"/>
            <person name="Copeland A."/>
            <person name="Lucas S."/>
            <person name="Lapidus A."/>
            <person name="Barry K."/>
            <person name="Glavina del Rio T."/>
            <person name="Dalin E."/>
            <person name="Tice H."/>
            <person name="Pitluck S."/>
            <person name="Clum A."/>
            <person name="Schmutz J."/>
            <person name="Larimer F."/>
            <person name="Land M."/>
            <person name="Hauser L."/>
            <person name="Kyrpides N."/>
            <person name="Mikhailova N."/>
            <person name="Sieprawska-Lupa M."/>
            <person name="Whitman W.B."/>
            <person name="Richardson P."/>
        </authorList>
    </citation>
    <scope>NUCLEOTIDE SEQUENCE [LARGE SCALE GENOMIC DNA]</scope>
    <source>
        <strain>C6 / ATCC BAA-1332</strain>
    </source>
</reference>
<gene>
    <name evidence="1" type="primary">trm1</name>
    <name type="ordered locus">MmarC6_0727</name>
</gene>
<sequence length="373" mass="41928">MKIISEGETKLMVPEESTLSKKDTVFYNPMMETNRDISVSVVQSFLDNFNRDEFLMCDPLGGSGARGIRYANELKFNGDLKVSIGDINPSAVKMIKENLKLNELENVEVFHEDANVLLSKNFKIFNVVDLDPFGSPVPYLDSGIRASLTKGGLLCMTATDTAVLCGAYRKTCIRKYNAIPLKGDKELAVRLMIGYAVKMASKYDIGLKPIFSHVTDHYARTFMVTERGAGKADSAIENLGYIRQDSEQKSFKSFEEGYEKGYTGPFYLGEISDNDIVQNSLETAKNRNYSKRAVDILELISKESKIEQVGCFDIHELCSFIKKLVPPVNDIMKNLKENGFKVSRVHYNPYGLKTDAELSDLVVLISEYHSKKY</sequence>
<dbReference type="EC" id="2.1.1.216" evidence="1"/>
<dbReference type="EMBL" id="CP000867">
    <property type="protein sequence ID" value="ABX01544.1"/>
    <property type="molecule type" value="Genomic_DNA"/>
</dbReference>
<dbReference type="SMR" id="A9A871"/>
<dbReference type="STRING" id="444158.MmarC6_0727"/>
<dbReference type="KEGG" id="mmx:MmarC6_0727"/>
<dbReference type="eggNOG" id="arCOG01219">
    <property type="taxonomic scope" value="Archaea"/>
</dbReference>
<dbReference type="HOGENOM" id="CLU_010862_5_1_2"/>
<dbReference type="OrthoDB" id="372177at2157"/>
<dbReference type="PhylomeDB" id="A9A871"/>
<dbReference type="GO" id="GO:0160104">
    <property type="term" value="F:tRNA (guanine(26)-N2)-dimethyltransferase activity"/>
    <property type="evidence" value="ECO:0007669"/>
    <property type="project" value="UniProtKB-UniRule"/>
</dbReference>
<dbReference type="GO" id="GO:0000049">
    <property type="term" value="F:tRNA binding"/>
    <property type="evidence" value="ECO:0007669"/>
    <property type="project" value="UniProtKB-KW"/>
</dbReference>
<dbReference type="GO" id="GO:0002940">
    <property type="term" value="P:tRNA N2-guanine methylation"/>
    <property type="evidence" value="ECO:0007669"/>
    <property type="project" value="TreeGrafter"/>
</dbReference>
<dbReference type="CDD" id="cd02440">
    <property type="entry name" value="AdoMet_MTases"/>
    <property type="match status" value="1"/>
</dbReference>
<dbReference type="Gene3D" id="3.30.56.70">
    <property type="entry name" value="N2,N2-dimethylguanosine tRNA methyltransferase, C-terminal domain"/>
    <property type="match status" value="1"/>
</dbReference>
<dbReference type="Gene3D" id="3.40.50.150">
    <property type="entry name" value="Vaccinia Virus protein VP39"/>
    <property type="match status" value="1"/>
</dbReference>
<dbReference type="HAMAP" id="MF_00290">
    <property type="entry name" value="tRNA_dimethyltr_TRM1"/>
    <property type="match status" value="1"/>
</dbReference>
<dbReference type="InterPro" id="IPR029063">
    <property type="entry name" value="SAM-dependent_MTases_sf"/>
</dbReference>
<dbReference type="InterPro" id="IPR002905">
    <property type="entry name" value="Trm1"/>
</dbReference>
<dbReference type="InterPro" id="IPR022923">
    <property type="entry name" value="TRM1_arc_bac"/>
</dbReference>
<dbReference type="InterPro" id="IPR042296">
    <property type="entry name" value="tRNA_met_Trm1_C"/>
</dbReference>
<dbReference type="NCBIfam" id="TIGR00308">
    <property type="entry name" value="TRM1"/>
    <property type="match status" value="1"/>
</dbReference>
<dbReference type="PANTHER" id="PTHR10631">
    <property type="entry name" value="N 2 ,N 2 -DIMETHYLGUANOSINE TRNA METHYLTRANSFERASE"/>
    <property type="match status" value="1"/>
</dbReference>
<dbReference type="PANTHER" id="PTHR10631:SF3">
    <property type="entry name" value="TRNA (GUANINE(26)-N(2))-DIMETHYLTRANSFERASE"/>
    <property type="match status" value="1"/>
</dbReference>
<dbReference type="Pfam" id="PF02005">
    <property type="entry name" value="TRM"/>
    <property type="match status" value="1"/>
</dbReference>
<dbReference type="SUPFAM" id="SSF53335">
    <property type="entry name" value="S-adenosyl-L-methionine-dependent methyltransferases"/>
    <property type="match status" value="1"/>
</dbReference>
<dbReference type="PROSITE" id="PS51626">
    <property type="entry name" value="SAM_MT_TRM1"/>
    <property type="match status" value="1"/>
</dbReference>
<comment type="function">
    <text evidence="1">Dimethylates a single guanine residue at position 26 of a number of tRNAs using S-adenosyl-L-methionine as donor of the methyl groups.</text>
</comment>
<comment type="catalytic activity">
    <reaction evidence="1">
        <text>guanosine(26) in tRNA + 2 S-adenosyl-L-methionine = N(2)-dimethylguanosine(26) in tRNA + 2 S-adenosyl-L-homocysteine + 2 H(+)</text>
        <dbReference type="Rhea" id="RHEA:43140"/>
        <dbReference type="Rhea" id="RHEA-COMP:10359"/>
        <dbReference type="Rhea" id="RHEA-COMP:10360"/>
        <dbReference type="ChEBI" id="CHEBI:15378"/>
        <dbReference type="ChEBI" id="CHEBI:57856"/>
        <dbReference type="ChEBI" id="CHEBI:59789"/>
        <dbReference type="ChEBI" id="CHEBI:74269"/>
        <dbReference type="ChEBI" id="CHEBI:74513"/>
        <dbReference type="EC" id="2.1.1.216"/>
    </reaction>
</comment>
<comment type="similarity">
    <text evidence="1">Belongs to the class I-like SAM-binding methyltransferase superfamily. Trm1 family.</text>
</comment>
<accession>A9A871</accession>